<gene>
    <name evidence="1" type="primary">ureC</name>
    <name type="ordered locus">Avi_3477</name>
</gene>
<sequence>MPFKMSRAAYASMFGPTTGDKVRLADTELFIEVEKDFTHYGDEVKFGGGKVIRDGMGQSQATRVDGAVDTVITNALIVDHWGIVKADIGLKDGRIVAIGKAGNPDTQPGVNIIVGPGTEAIAGEGKIVTAGGMDSHIHFICPQQIEEALMSGLTCMLGGGTGPAHGTLATTCTPGPWHIARMIEAADAFPMNLAFAGKGNASLPGALEEMVLGGACALKLHEDWGTTPGAVDCCLSVADDYDVQVMIHTDTLNESGFVEDSIGAIKGRTIHAFHTEGAGGGHAPDIIKICGQPNVIPSSTNPTRPYTINTLAEHLDMLMVCHHLSPSIPEDIAFAESRIRKETIAAEDILHDIGAFSIISSDSQAMGRVGEVAIRTWQTADKMKRQRGRLPSETGENDNMRVKRYIAKYTINPAIAHGLSHEIGSIEIGKRADLVIWNPAFFGVKPDMVLLGGSIAAAPMGDPNASIPTPQPVHYRHMFGAYGKARTNSSVTFVSQASLDVGLAARLGVSKQLLAVKNTRGGISKASMIHNSLTPHIEVDPETYEVRADGELLTCEPATVLPMAQRYFLF</sequence>
<keyword id="KW-0963">Cytoplasm</keyword>
<keyword id="KW-0378">Hydrolase</keyword>
<keyword id="KW-0479">Metal-binding</keyword>
<keyword id="KW-0533">Nickel</keyword>
<keyword id="KW-1185">Reference proteome</keyword>
<comment type="catalytic activity">
    <reaction evidence="1">
        <text>urea + 2 H2O + H(+) = hydrogencarbonate + 2 NH4(+)</text>
        <dbReference type="Rhea" id="RHEA:20557"/>
        <dbReference type="ChEBI" id="CHEBI:15377"/>
        <dbReference type="ChEBI" id="CHEBI:15378"/>
        <dbReference type="ChEBI" id="CHEBI:16199"/>
        <dbReference type="ChEBI" id="CHEBI:17544"/>
        <dbReference type="ChEBI" id="CHEBI:28938"/>
        <dbReference type="EC" id="3.5.1.5"/>
    </reaction>
</comment>
<comment type="cofactor">
    <cofactor evidence="1">
        <name>Ni cation</name>
        <dbReference type="ChEBI" id="CHEBI:25516"/>
    </cofactor>
    <text evidence="1">Binds 2 nickel ions per subunit.</text>
</comment>
<comment type="pathway">
    <text evidence="1">Nitrogen metabolism; urea degradation; CO(2) and NH(3) from urea (urease route): step 1/1.</text>
</comment>
<comment type="subunit">
    <text evidence="1">Heterotrimer of UreA (gamma), UreB (beta) and UreC (alpha) subunits. Three heterotrimers associate to form the active enzyme.</text>
</comment>
<comment type="subcellular location">
    <subcellularLocation>
        <location evidence="1">Cytoplasm</location>
    </subcellularLocation>
</comment>
<comment type="PTM">
    <text evidence="1">Carboxylation allows a single lysine to coordinate two nickel ions.</text>
</comment>
<comment type="similarity">
    <text evidence="1">Belongs to the metallo-dependent hydrolases superfamily. Urease alpha subunit family.</text>
</comment>
<feature type="chain" id="PRO_1000188858" description="Urease subunit alpha">
    <location>
        <begin position="1"/>
        <end position="570"/>
    </location>
</feature>
<feature type="domain" description="Urease" evidence="1">
    <location>
        <begin position="131"/>
        <end position="570"/>
    </location>
</feature>
<feature type="active site" description="Proton donor" evidence="1">
    <location>
        <position position="322"/>
    </location>
</feature>
<feature type="binding site" evidence="1">
    <location>
        <position position="136"/>
    </location>
    <ligand>
        <name>Ni(2+)</name>
        <dbReference type="ChEBI" id="CHEBI:49786"/>
        <label>1</label>
    </ligand>
</feature>
<feature type="binding site" evidence="1">
    <location>
        <position position="138"/>
    </location>
    <ligand>
        <name>Ni(2+)</name>
        <dbReference type="ChEBI" id="CHEBI:49786"/>
        <label>1</label>
    </ligand>
</feature>
<feature type="binding site" description="via carbamate group" evidence="1">
    <location>
        <position position="219"/>
    </location>
    <ligand>
        <name>Ni(2+)</name>
        <dbReference type="ChEBI" id="CHEBI:49786"/>
        <label>1</label>
    </ligand>
</feature>
<feature type="binding site" description="via carbamate group" evidence="1">
    <location>
        <position position="219"/>
    </location>
    <ligand>
        <name>Ni(2+)</name>
        <dbReference type="ChEBI" id="CHEBI:49786"/>
        <label>2</label>
    </ligand>
</feature>
<feature type="binding site" evidence="1">
    <location>
        <position position="221"/>
    </location>
    <ligand>
        <name>substrate</name>
    </ligand>
</feature>
<feature type="binding site" evidence="1">
    <location>
        <position position="248"/>
    </location>
    <ligand>
        <name>Ni(2+)</name>
        <dbReference type="ChEBI" id="CHEBI:49786"/>
        <label>2</label>
    </ligand>
</feature>
<feature type="binding site" evidence="1">
    <location>
        <position position="274"/>
    </location>
    <ligand>
        <name>Ni(2+)</name>
        <dbReference type="ChEBI" id="CHEBI:49786"/>
        <label>2</label>
    </ligand>
</feature>
<feature type="binding site" evidence="1">
    <location>
        <position position="362"/>
    </location>
    <ligand>
        <name>Ni(2+)</name>
        <dbReference type="ChEBI" id="CHEBI:49786"/>
        <label>1</label>
    </ligand>
</feature>
<feature type="modified residue" description="N6-carboxylysine" evidence="1">
    <location>
        <position position="219"/>
    </location>
</feature>
<accession>B9JR81</accession>
<organism>
    <name type="scientific">Allorhizobium ampelinum (strain ATCC BAA-846 / DSM 112012 / S4)</name>
    <name type="common">Agrobacterium vitis (strain S4)</name>
    <dbReference type="NCBI Taxonomy" id="311402"/>
    <lineage>
        <taxon>Bacteria</taxon>
        <taxon>Pseudomonadati</taxon>
        <taxon>Pseudomonadota</taxon>
        <taxon>Alphaproteobacteria</taxon>
        <taxon>Hyphomicrobiales</taxon>
        <taxon>Rhizobiaceae</taxon>
        <taxon>Rhizobium/Agrobacterium group</taxon>
        <taxon>Allorhizobium</taxon>
        <taxon>Allorhizobium ampelinum</taxon>
    </lineage>
</organism>
<dbReference type="EC" id="3.5.1.5" evidence="1"/>
<dbReference type="EMBL" id="CP000633">
    <property type="protein sequence ID" value="ACM37492.1"/>
    <property type="molecule type" value="Genomic_DNA"/>
</dbReference>
<dbReference type="RefSeq" id="WP_015916905.1">
    <property type="nucleotide sequence ID" value="NC_011989.1"/>
</dbReference>
<dbReference type="SMR" id="B9JR81"/>
<dbReference type="STRING" id="311402.Avi_3477"/>
<dbReference type="KEGG" id="avi:Avi_3477"/>
<dbReference type="eggNOG" id="COG0804">
    <property type="taxonomic scope" value="Bacteria"/>
</dbReference>
<dbReference type="HOGENOM" id="CLU_000980_0_0_5"/>
<dbReference type="UniPathway" id="UPA00258">
    <property type="reaction ID" value="UER00370"/>
</dbReference>
<dbReference type="Proteomes" id="UP000001596">
    <property type="component" value="Chromosome 1"/>
</dbReference>
<dbReference type="GO" id="GO:0005737">
    <property type="term" value="C:cytoplasm"/>
    <property type="evidence" value="ECO:0007669"/>
    <property type="project" value="UniProtKB-SubCell"/>
</dbReference>
<dbReference type="GO" id="GO:0016151">
    <property type="term" value="F:nickel cation binding"/>
    <property type="evidence" value="ECO:0007669"/>
    <property type="project" value="UniProtKB-UniRule"/>
</dbReference>
<dbReference type="GO" id="GO:0009039">
    <property type="term" value="F:urease activity"/>
    <property type="evidence" value="ECO:0007669"/>
    <property type="project" value="UniProtKB-UniRule"/>
</dbReference>
<dbReference type="GO" id="GO:0043419">
    <property type="term" value="P:urea catabolic process"/>
    <property type="evidence" value="ECO:0007669"/>
    <property type="project" value="UniProtKB-UniRule"/>
</dbReference>
<dbReference type="CDD" id="cd00375">
    <property type="entry name" value="Urease_alpha"/>
    <property type="match status" value="1"/>
</dbReference>
<dbReference type="Gene3D" id="3.20.20.140">
    <property type="entry name" value="Metal-dependent hydrolases"/>
    <property type="match status" value="1"/>
</dbReference>
<dbReference type="Gene3D" id="2.30.40.10">
    <property type="entry name" value="Urease, subunit C, domain 1"/>
    <property type="match status" value="1"/>
</dbReference>
<dbReference type="HAMAP" id="MF_01953">
    <property type="entry name" value="Urease_alpha"/>
    <property type="match status" value="1"/>
</dbReference>
<dbReference type="InterPro" id="IPR006680">
    <property type="entry name" value="Amidohydro-rel"/>
</dbReference>
<dbReference type="InterPro" id="IPR011059">
    <property type="entry name" value="Metal-dep_hydrolase_composite"/>
</dbReference>
<dbReference type="InterPro" id="IPR032466">
    <property type="entry name" value="Metal_Hydrolase"/>
</dbReference>
<dbReference type="InterPro" id="IPR011612">
    <property type="entry name" value="Urease_alpha_N_dom"/>
</dbReference>
<dbReference type="InterPro" id="IPR050112">
    <property type="entry name" value="Urease_alpha_subunit"/>
</dbReference>
<dbReference type="InterPro" id="IPR017950">
    <property type="entry name" value="Urease_AS"/>
</dbReference>
<dbReference type="InterPro" id="IPR005848">
    <property type="entry name" value="Urease_asu"/>
</dbReference>
<dbReference type="InterPro" id="IPR017951">
    <property type="entry name" value="Urease_asu_c"/>
</dbReference>
<dbReference type="InterPro" id="IPR029754">
    <property type="entry name" value="Urease_Ni-bd"/>
</dbReference>
<dbReference type="NCBIfam" id="NF009685">
    <property type="entry name" value="PRK13206.1"/>
    <property type="match status" value="1"/>
</dbReference>
<dbReference type="NCBIfam" id="NF009686">
    <property type="entry name" value="PRK13207.1"/>
    <property type="match status" value="1"/>
</dbReference>
<dbReference type="NCBIfam" id="TIGR01792">
    <property type="entry name" value="urease_alph"/>
    <property type="match status" value="1"/>
</dbReference>
<dbReference type="PANTHER" id="PTHR43440">
    <property type="entry name" value="UREASE"/>
    <property type="match status" value="1"/>
</dbReference>
<dbReference type="PANTHER" id="PTHR43440:SF1">
    <property type="entry name" value="UREASE"/>
    <property type="match status" value="1"/>
</dbReference>
<dbReference type="Pfam" id="PF01979">
    <property type="entry name" value="Amidohydro_1"/>
    <property type="match status" value="1"/>
</dbReference>
<dbReference type="Pfam" id="PF00449">
    <property type="entry name" value="Urease_alpha"/>
    <property type="match status" value="1"/>
</dbReference>
<dbReference type="PRINTS" id="PR01752">
    <property type="entry name" value="UREASE"/>
</dbReference>
<dbReference type="SUPFAM" id="SSF51338">
    <property type="entry name" value="Composite domain of metallo-dependent hydrolases"/>
    <property type="match status" value="2"/>
</dbReference>
<dbReference type="SUPFAM" id="SSF51556">
    <property type="entry name" value="Metallo-dependent hydrolases"/>
    <property type="match status" value="1"/>
</dbReference>
<dbReference type="PROSITE" id="PS01120">
    <property type="entry name" value="UREASE_1"/>
    <property type="match status" value="1"/>
</dbReference>
<dbReference type="PROSITE" id="PS00145">
    <property type="entry name" value="UREASE_2"/>
    <property type="match status" value="1"/>
</dbReference>
<dbReference type="PROSITE" id="PS51368">
    <property type="entry name" value="UREASE_3"/>
    <property type="match status" value="1"/>
</dbReference>
<proteinExistence type="inferred from homology"/>
<protein>
    <recommendedName>
        <fullName evidence="1">Urease subunit alpha</fullName>
        <ecNumber evidence="1">3.5.1.5</ecNumber>
    </recommendedName>
    <alternativeName>
        <fullName evidence="1">Urea amidohydrolase subunit alpha</fullName>
    </alternativeName>
</protein>
<reference key="1">
    <citation type="journal article" date="2009" name="J. Bacteriol.">
        <title>Genome sequences of three Agrobacterium biovars help elucidate the evolution of multichromosome genomes in bacteria.</title>
        <authorList>
            <person name="Slater S.C."/>
            <person name="Goldman B.S."/>
            <person name="Goodner B."/>
            <person name="Setubal J.C."/>
            <person name="Farrand S.K."/>
            <person name="Nester E.W."/>
            <person name="Burr T.J."/>
            <person name="Banta L."/>
            <person name="Dickerman A.W."/>
            <person name="Paulsen I."/>
            <person name="Otten L."/>
            <person name="Suen G."/>
            <person name="Welch R."/>
            <person name="Almeida N.F."/>
            <person name="Arnold F."/>
            <person name="Burton O.T."/>
            <person name="Du Z."/>
            <person name="Ewing A."/>
            <person name="Godsy E."/>
            <person name="Heisel S."/>
            <person name="Houmiel K.L."/>
            <person name="Jhaveri J."/>
            <person name="Lu J."/>
            <person name="Miller N.M."/>
            <person name="Norton S."/>
            <person name="Chen Q."/>
            <person name="Phoolcharoen W."/>
            <person name="Ohlin V."/>
            <person name="Ondrusek D."/>
            <person name="Pride N."/>
            <person name="Stricklin S.L."/>
            <person name="Sun J."/>
            <person name="Wheeler C."/>
            <person name="Wilson L."/>
            <person name="Zhu H."/>
            <person name="Wood D.W."/>
        </authorList>
    </citation>
    <scope>NUCLEOTIDE SEQUENCE [LARGE SCALE GENOMIC DNA]</scope>
    <source>
        <strain>ATCC BAA-846 / DSM 112012 / S4</strain>
    </source>
</reference>
<evidence type="ECO:0000255" key="1">
    <source>
        <dbReference type="HAMAP-Rule" id="MF_01953"/>
    </source>
</evidence>
<name>URE1_ALLAM</name>